<sequence length="173" mass="19312">MTVLDIVTYPADVLKDGALPVANIDGKLQQLIDDMAQTMYAHQGVGLAAVQVDSGLRLVIYDVSDQREKQQFRVVINPEVVAVDGECVSEQEGCLSVPELRTDVKRAATVRVEGVDREGRPLVIDAEGLEAIVLQHEIDHLNGTLILDRASRLKRELYKRKVQKRIKQAWQET</sequence>
<name>DEF_DESOH</name>
<reference key="1">
    <citation type="submission" date="2007-10" db="EMBL/GenBank/DDBJ databases">
        <title>Complete sequence of Desulfococcus oleovorans Hxd3.</title>
        <authorList>
            <consortium name="US DOE Joint Genome Institute"/>
            <person name="Copeland A."/>
            <person name="Lucas S."/>
            <person name="Lapidus A."/>
            <person name="Barry K."/>
            <person name="Glavina del Rio T."/>
            <person name="Dalin E."/>
            <person name="Tice H."/>
            <person name="Pitluck S."/>
            <person name="Kiss H."/>
            <person name="Brettin T."/>
            <person name="Bruce D."/>
            <person name="Detter J.C."/>
            <person name="Han C."/>
            <person name="Schmutz J."/>
            <person name="Larimer F."/>
            <person name="Land M."/>
            <person name="Hauser L."/>
            <person name="Kyrpides N."/>
            <person name="Kim E."/>
            <person name="Wawrik B."/>
            <person name="Richardson P."/>
        </authorList>
    </citation>
    <scope>NUCLEOTIDE SEQUENCE [LARGE SCALE GENOMIC DNA]</scope>
    <source>
        <strain>DSM 6200 / JCM 39069 / Hxd3</strain>
    </source>
</reference>
<dbReference type="EC" id="3.5.1.88" evidence="1"/>
<dbReference type="EMBL" id="CP000859">
    <property type="protein sequence ID" value="ABW68037.1"/>
    <property type="molecule type" value="Genomic_DNA"/>
</dbReference>
<dbReference type="RefSeq" id="WP_012175649.1">
    <property type="nucleotide sequence ID" value="NC_009943.1"/>
</dbReference>
<dbReference type="SMR" id="A8ZUK5"/>
<dbReference type="STRING" id="96561.Dole_2233"/>
<dbReference type="KEGG" id="dol:Dole_2233"/>
<dbReference type="eggNOG" id="COG0242">
    <property type="taxonomic scope" value="Bacteria"/>
</dbReference>
<dbReference type="HOGENOM" id="CLU_061901_2_0_7"/>
<dbReference type="OrthoDB" id="9804313at2"/>
<dbReference type="Proteomes" id="UP000008561">
    <property type="component" value="Chromosome"/>
</dbReference>
<dbReference type="GO" id="GO:0046872">
    <property type="term" value="F:metal ion binding"/>
    <property type="evidence" value="ECO:0007669"/>
    <property type="project" value="UniProtKB-KW"/>
</dbReference>
<dbReference type="GO" id="GO:0042586">
    <property type="term" value="F:peptide deformylase activity"/>
    <property type="evidence" value="ECO:0007669"/>
    <property type="project" value="UniProtKB-UniRule"/>
</dbReference>
<dbReference type="GO" id="GO:0043686">
    <property type="term" value="P:co-translational protein modification"/>
    <property type="evidence" value="ECO:0007669"/>
    <property type="project" value="TreeGrafter"/>
</dbReference>
<dbReference type="GO" id="GO:0006412">
    <property type="term" value="P:translation"/>
    <property type="evidence" value="ECO:0007669"/>
    <property type="project" value="UniProtKB-UniRule"/>
</dbReference>
<dbReference type="CDD" id="cd00487">
    <property type="entry name" value="Pep_deformylase"/>
    <property type="match status" value="1"/>
</dbReference>
<dbReference type="Gene3D" id="3.90.45.10">
    <property type="entry name" value="Peptide deformylase"/>
    <property type="match status" value="1"/>
</dbReference>
<dbReference type="HAMAP" id="MF_00163">
    <property type="entry name" value="Pep_deformylase"/>
    <property type="match status" value="1"/>
</dbReference>
<dbReference type="InterPro" id="IPR023635">
    <property type="entry name" value="Peptide_deformylase"/>
</dbReference>
<dbReference type="InterPro" id="IPR036821">
    <property type="entry name" value="Peptide_deformylase_sf"/>
</dbReference>
<dbReference type="NCBIfam" id="TIGR00079">
    <property type="entry name" value="pept_deformyl"/>
    <property type="match status" value="1"/>
</dbReference>
<dbReference type="NCBIfam" id="NF001159">
    <property type="entry name" value="PRK00150.1-3"/>
    <property type="match status" value="1"/>
</dbReference>
<dbReference type="PANTHER" id="PTHR10458">
    <property type="entry name" value="PEPTIDE DEFORMYLASE"/>
    <property type="match status" value="1"/>
</dbReference>
<dbReference type="PANTHER" id="PTHR10458:SF22">
    <property type="entry name" value="PEPTIDE DEFORMYLASE"/>
    <property type="match status" value="1"/>
</dbReference>
<dbReference type="Pfam" id="PF01327">
    <property type="entry name" value="Pep_deformylase"/>
    <property type="match status" value="1"/>
</dbReference>
<dbReference type="PIRSF" id="PIRSF004749">
    <property type="entry name" value="Pep_def"/>
    <property type="match status" value="1"/>
</dbReference>
<dbReference type="PRINTS" id="PR01576">
    <property type="entry name" value="PDEFORMYLASE"/>
</dbReference>
<dbReference type="SUPFAM" id="SSF56420">
    <property type="entry name" value="Peptide deformylase"/>
    <property type="match status" value="1"/>
</dbReference>
<organism>
    <name type="scientific">Desulfosudis oleivorans (strain DSM 6200 / JCM 39069 / Hxd3)</name>
    <name type="common">Desulfococcus oleovorans</name>
    <dbReference type="NCBI Taxonomy" id="96561"/>
    <lineage>
        <taxon>Bacteria</taxon>
        <taxon>Pseudomonadati</taxon>
        <taxon>Thermodesulfobacteriota</taxon>
        <taxon>Desulfobacteria</taxon>
        <taxon>Desulfobacterales</taxon>
        <taxon>Desulfosudaceae</taxon>
        <taxon>Desulfosudis</taxon>
    </lineage>
</organism>
<evidence type="ECO:0000255" key="1">
    <source>
        <dbReference type="HAMAP-Rule" id="MF_00163"/>
    </source>
</evidence>
<accession>A8ZUK5</accession>
<protein>
    <recommendedName>
        <fullName evidence="1">Peptide deformylase</fullName>
        <shortName evidence="1">PDF</shortName>
        <ecNumber evidence="1">3.5.1.88</ecNumber>
    </recommendedName>
    <alternativeName>
        <fullName evidence="1">Polypeptide deformylase</fullName>
    </alternativeName>
</protein>
<comment type="function">
    <text evidence="1">Removes the formyl group from the N-terminal Met of newly synthesized proteins. Requires at least a dipeptide for an efficient rate of reaction. N-terminal L-methionine is a prerequisite for activity but the enzyme has broad specificity at other positions.</text>
</comment>
<comment type="catalytic activity">
    <reaction evidence="1">
        <text>N-terminal N-formyl-L-methionyl-[peptide] + H2O = N-terminal L-methionyl-[peptide] + formate</text>
        <dbReference type="Rhea" id="RHEA:24420"/>
        <dbReference type="Rhea" id="RHEA-COMP:10639"/>
        <dbReference type="Rhea" id="RHEA-COMP:10640"/>
        <dbReference type="ChEBI" id="CHEBI:15377"/>
        <dbReference type="ChEBI" id="CHEBI:15740"/>
        <dbReference type="ChEBI" id="CHEBI:49298"/>
        <dbReference type="ChEBI" id="CHEBI:64731"/>
        <dbReference type="EC" id="3.5.1.88"/>
    </reaction>
</comment>
<comment type="cofactor">
    <cofactor evidence="1">
        <name>Fe(2+)</name>
        <dbReference type="ChEBI" id="CHEBI:29033"/>
    </cofactor>
    <text evidence="1">Binds 1 Fe(2+) ion.</text>
</comment>
<comment type="similarity">
    <text evidence="1">Belongs to the polypeptide deformylase family.</text>
</comment>
<proteinExistence type="inferred from homology"/>
<keyword id="KW-0378">Hydrolase</keyword>
<keyword id="KW-0408">Iron</keyword>
<keyword id="KW-0479">Metal-binding</keyword>
<keyword id="KW-0648">Protein biosynthesis</keyword>
<keyword id="KW-1185">Reference proteome</keyword>
<feature type="chain" id="PRO_1000097304" description="Peptide deformylase">
    <location>
        <begin position="1"/>
        <end position="173"/>
    </location>
</feature>
<feature type="active site" evidence="1">
    <location>
        <position position="137"/>
    </location>
</feature>
<feature type="binding site" evidence="1">
    <location>
        <position position="94"/>
    </location>
    <ligand>
        <name>Fe cation</name>
        <dbReference type="ChEBI" id="CHEBI:24875"/>
    </ligand>
</feature>
<feature type="binding site" evidence="1">
    <location>
        <position position="136"/>
    </location>
    <ligand>
        <name>Fe cation</name>
        <dbReference type="ChEBI" id="CHEBI:24875"/>
    </ligand>
</feature>
<feature type="binding site" evidence="1">
    <location>
        <position position="140"/>
    </location>
    <ligand>
        <name>Fe cation</name>
        <dbReference type="ChEBI" id="CHEBI:24875"/>
    </ligand>
</feature>
<gene>
    <name evidence="1" type="primary">def</name>
    <name type="ordered locus">Dole_2233</name>
</gene>